<name>S2547_HUMAN</name>
<accession>Q6Q0C1</accession>
<accession>B2RP39</accession>
<accession>Q68CL2</accession>
<accession>Q6PZD8</accession>
<accession>Q86U14</accession>
<gene>
    <name evidence="9" type="primary">SLC25A47</name>
    <name type="synonym">C14orf68</name>
    <name type="synonym">HDMCP</name>
    <name type="ORF">HMFN1655</name>
</gene>
<comment type="function">
    <text evidence="1 4">Mitochondrial NAD(+) transporter that acts as a 'metabolic gate' in hepatic lipogenesis. Provides NAD(+) substrate to mitochondrial SIRT3 deacetylase and enables its NAD(+)-dependent activities in mitochondrial energy metabolism. This triggers downstream activation of PRKAA1/AMPK-alpha signaling cascade that negatively regulates sterol regulatory element-binding protein (SREBP) transcriptional activities and ATP-consuming lipogenesis to restore cellular energy balance. May transport other mitochondrial metabolites having an aromatic nucleotide and phosphate groups, such as acetyl-CoA. Does not transport amino acids. The transport mechanism remains to be elucidated.</text>
</comment>
<comment type="catalytic activity">
    <reaction evidence="4">
        <text>NAD(+)(in) = NAD(+)(out)</text>
        <dbReference type="Rhea" id="RHEA:65408"/>
        <dbReference type="ChEBI" id="CHEBI:57540"/>
    </reaction>
</comment>
<comment type="catalytic activity">
    <reaction evidence="1">
        <text>acetyl-CoA(in) = acetyl-CoA(out)</text>
        <dbReference type="Rhea" id="RHEA:75039"/>
        <dbReference type="ChEBI" id="CHEBI:57288"/>
    </reaction>
</comment>
<comment type="subcellular location">
    <subcellularLocation>
        <location evidence="3">Mitochondrion inner membrane</location>
        <topology evidence="2">Multi-pass membrane protein</topology>
    </subcellularLocation>
    <subcellularLocation>
        <location evidence="1">Mitochondrion outer membrane</location>
        <topology evidence="2">Multi-pass membrane protein</topology>
    </subcellularLocation>
</comment>
<comment type="alternative products">
    <event type="alternative splicing"/>
    <isoform>
        <id>Q6Q0C1-1</id>
        <name>1</name>
        <sequence type="displayed"/>
    </isoform>
    <isoform>
        <id>Q6Q0C1-2</id>
        <name>2</name>
        <sequence type="described" ref="VSP_026233 VSP_026234"/>
    </isoform>
</comment>
<comment type="tissue specificity">
    <text evidence="3 4">Specifically expressed in liver.</text>
</comment>
<comment type="induction">
    <text evidence="3">Down-regulated in hepatocarcinoma.</text>
</comment>
<comment type="similarity">
    <text evidence="8">Belongs to the mitochondrial carrier (TC 2.A.29) family.</text>
</comment>
<comment type="sequence caution" evidence="8">
    <conflict type="erroneous translation">
        <sequence resource="EMBL-CDS" id="BAD38636"/>
    </conflict>
    <text>Wrong choice of frame.</text>
</comment>
<comment type="sequence caution" evidence="8">
    <conflict type="erroneous initiation">
        <sequence resource="EMBL-CDS" id="CAD62588"/>
    </conflict>
    <text>Extended N-terminus.</text>
</comment>
<dbReference type="EMBL" id="AY569438">
    <property type="protein sequence ID" value="AAS80155.1"/>
    <property type="molecule type" value="mRNA"/>
</dbReference>
<dbReference type="EMBL" id="AY570298">
    <property type="protein sequence ID" value="AAS77211.1"/>
    <property type="molecule type" value="mRNA"/>
</dbReference>
<dbReference type="EMBL" id="AB073385">
    <property type="protein sequence ID" value="BAD38636.1"/>
    <property type="status" value="ALT_SEQ"/>
    <property type="molecule type" value="mRNA"/>
</dbReference>
<dbReference type="EMBL" id="AK092001">
    <property type="protein sequence ID" value="BAG52460.1"/>
    <property type="molecule type" value="mRNA"/>
</dbReference>
<dbReference type="EMBL" id="BX248260">
    <property type="protein sequence ID" value="CAD62588.1"/>
    <property type="status" value="ALT_INIT"/>
    <property type="molecule type" value="mRNA"/>
</dbReference>
<dbReference type="EMBL" id="CH471061">
    <property type="protein sequence ID" value="EAW81697.1"/>
    <property type="molecule type" value="Genomic_DNA"/>
</dbReference>
<dbReference type="EMBL" id="BC137253">
    <property type="protein sequence ID" value="AAI37254.1"/>
    <property type="molecule type" value="mRNA"/>
</dbReference>
<dbReference type="EMBL" id="BC137254">
    <property type="protein sequence ID" value="AAI37255.1"/>
    <property type="molecule type" value="mRNA"/>
</dbReference>
<dbReference type="CCDS" id="CCDS9959.1">
    <molecule id="Q6Q0C1-1"/>
</dbReference>
<dbReference type="RefSeq" id="NP_997000.2">
    <molecule id="Q6Q0C1-1"/>
    <property type="nucleotide sequence ID" value="NM_207117.2"/>
</dbReference>
<dbReference type="SMR" id="Q6Q0C1"/>
<dbReference type="BioGRID" id="129619">
    <property type="interactions" value="35"/>
</dbReference>
<dbReference type="FunCoup" id="Q6Q0C1">
    <property type="interactions" value="40"/>
</dbReference>
<dbReference type="IntAct" id="Q6Q0C1">
    <property type="interactions" value="5"/>
</dbReference>
<dbReference type="STRING" id="9606.ENSP00000354886"/>
<dbReference type="TCDB" id="2.A.29.8.10">
    <property type="family name" value="the mitochondrial carrier (mc) family"/>
</dbReference>
<dbReference type="iPTMnet" id="Q6Q0C1"/>
<dbReference type="PhosphoSitePlus" id="Q6Q0C1"/>
<dbReference type="BioMuta" id="SLC25A47"/>
<dbReference type="DMDM" id="74749277"/>
<dbReference type="MassIVE" id="Q6Q0C1"/>
<dbReference type="PaxDb" id="9606-ENSP00000354886"/>
<dbReference type="PeptideAtlas" id="Q6Q0C1"/>
<dbReference type="Antibodypedia" id="27517">
    <property type="antibodies" value="89 antibodies from 22 providers"/>
</dbReference>
<dbReference type="DNASU" id="283600"/>
<dbReference type="Ensembl" id="ENST00000361529.5">
    <molecule id="Q6Q0C1-1"/>
    <property type="protein sequence ID" value="ENSP00000354886.3"/>
    <property type="gene ID" value="ENSG00000140107.12"/>
</dbReference>
<dbReference type="GeneID" id="283600"/>
<dbReference type="KEGG" id="hsa:283600"/>
<dbReference type="MANE-Select" id="ENST00000361529.5">
    <property type="protein sequence ID" value="ENSP00000354886.3"/>
    <property type="RefSeq nucleotide sequence ID" value="NM_207117.4"/>
    <property type="RefSeq protein sequence ID" value="NP_997000.2"/>
</dbReference>
<dbReference type="UCSC" id="uc001yhc.4">
    <molecule id="Q6Q0C1-1"/>
    <property type="organism name" value="human"/>
</dbReference>
<dbReference type="AGR" id="HGNC:20115"/>
<dbReference type="CTD" id="283600"/>
<dbReference type="DisGeNET" id="283600"/>
<dbReference type="GeneCards" id="SLC25A47"/>
<dbReference type="HGNC" id="HGNC:20115">
    <property type="gene designation" value="SLC25A47"/>
</dbReference>
<dbReference type="HPA" id="ENSG00000140107">
    <property type="expression patterns" value="Tissue enriched (liver)"/>
</dbReference>
<dbReference type="MalaCards" id="SLC25A47"/>
<dbReference type="MIM" id="609911">
    <property type="type" value="gene"/>
</dbReference>
<dbReference type="neXtProt" id="NX_Q6Q0C1"/>
<dbReference type="OpenTargets" id="ENSG00000140107"/>
<dbReference type="PharmGKB" id="PA165479287"/>
<dbReference type="VEuPathDB" id="HostDB:ENSG00000140107"/>
<dbReference type="eggNOG" id="KOG0762">
    <property type="taxonomic scope" value="Eukaryota"/>
</dbReference>
<dbReference type="GeneTree" id="ENSGT00940000159694"/>
<dbReference type="HOGENOM" id="CLU_015166_16_1_1"/>
<dbReference type="InParanoid" id="Q6Q0C1"/>
<dbReference type="OMA" id="HICRLRY"/>
<dbReference type="OrthoDB" id="193856at2759"/>
<dbReference type="PAN-GO" id="Q6Q0C1">
    <property type="GO annotations" value="3 GO annotations based on evolutionary models"/>
</dbReference>
<dbReference type="PhylomeDB" id="Q6Q0C1"/>
<dbReference type="TreeFam" id="TF351739"/>
<dbReference type="PathwayCommons" id="Q6Q0C1"/>
<dbReference type="SignaLink" id="Q6Q0C1"/>
<dbReference type="BioGRID-ORCS" id="283600">
    <property type="hits" value="10 hits in 1147 CRISPR screens"/>
</dbReference>
<dbReference type="GenomeRNAi" id="283600"/>
<dbReference type="Pharos" id="Q6Q0C1">
    <property type="development level" value="Tbio"/>
</dbReference>
<dbReference type="PRO" id="PR:Q6Q0C1"/>
<dbReference type="Proteomes" id="UP000005640">
    <property type="component" value="Chromosome 14"/>
</dbReference>
<dbReference type="RNAct" id="Q6Q0C1">
    <property type="molecule type" value="protein"/>
</dbReference>
<dbReference type="Bgee" id="ENSG00000140107">
    <property type="expression patterns" value="Expressed in right lobe of liver and 48 other cell types or tissues"/>
</dbReference>
<dbReference type="ExpressionAtlas" id="Q6Q0C1">
    <property type="expression patterns" value="baseline and differential"/>
</dbReference>
<dbReference type="GO" id="GO:0005743">
    <property type="term" value="C:mitochondrial inner membrane"/>
    <property type="evidence" value="ECO:0000250"/>
    <property type="project" value="UniProtKB"/>
</dbReference>
<dbReference type="GO" id="GO:0005741">
    <property type="term" value="C:mitochondrial outer membrane"/>
    <property type="evidence" value="ECO:0000250"/>
    <property type="project" value="UniProtKB"/>
</dbReference>
<dbReference type="GO" id="GO:0005739">
    <property type="term" value="C:mitochondrion"/>
    <property type="evidence" value="ECO:0006056"/>
    <property type="project" value="FlyBase"/>
</dbReference>
<dbReference type="GO" id="GO:0008521">
    <property type="term" value="F:acetyl-CoA transmembrane transporter activity"/>
    <property type="evidence" value="ECO:0000250"/>
    <property type="project" value="UniProtKB"/>
</dbReference>
<dbReference type="GO" id="GO:0051724">
    <property type="term" value="F:NAD transmembrane transporter activity"/>
    <property type="evidence" value="ECO:0000250"/>
    <property type="project" value="UniProtKB"/>
</dbReference>
<dbReference type="GO" id="GO:0022857">
    <property type="term" value="F:transmembrane transporter activity"/>
    <property type="evidence" value="ECO:0000318"/>
    <property type="project" value="GO_Central"/>
</dbReference>
<dbReference type="FunFam" id="1.50.40.10:FF:000069">
    <property type="entry name" value="Solute carrier family 25 member 47"/>
    <property type="match status" value="1"/>
</dbReference>
<dbReference type="FunFam" id="1.50.40.10:FF:000072">
    <property type="entry name" value="solute carrier family 25 member 47"/>
    <property type="match status" value="1"/>
</dbReference>
<dbReference type="Gene3D" id="1.50.40.10">
    <property type="entry name" value="Mitochondrial carrier domain"/>
    <property type="match status" value="2"/>
</dbReference>
<dbReference type="InterPro" id="IPR002067">
    <property type="entry name" value="Mit_carrier"/>
</dbReference>
<dbReference type="InterPro" id="IPR050567">
    <property type="entry name" value="Mitochondrial_Carrier"/>
</dbReference>
<dbReference type="InterPro" id="IPR018108">
    <property type="entry name" value="Mitochondrial_sb/sol_carrier"/>
</dbReference>
<dbReference type="InterPro" id="IPR023395">
    <property type="entry name" value="Mt_carrier_dom_sf"/>
</dbReference>
<dbReference type="PANTHER" id="PTHR45624">
    <property type="entry name" value="MITOCHONDRIAL BASIC AMINO ACIDS TRANSPORTER-RELATED"/>
    <property type="match status" value="1"/>
</dbReference>
<dbReference type="PANTHER" id="PTHR45624:SF3">
    <property type="entry name" value="SOLUTE CARRIER FAMILY 25 MEMBER 47"/>
    <property type="match status" value="1"/>
</dbReference>
<dbReference type="Pfam" id="PF00153">
    <property type="entry name" value="Mito_carr"/>
    <property type="match status" value="3"/>
</dbReference>
<dbReference type="PRINTS" id="PR00926">
    <property type="entry name" value="MITOCARRIER"/>
</dbReference>
<dbReference type="SUPFAM" id="SSF103506">
    <property type="entry name" value="Mitochondrial carrier"/>
    <property type="match status" value="1"/>
</dbReference>
<dbReference type="PROSITE" id="PS50920">
    <property type="entry name" value="SOLCAR"/>
    <property type="match status" value="3"/>
</dbReference>
<evidence type="ECO:0000250" key="1">
    <source>
        <dbReference type="UniProtKB" id="Q6IS41"/>
    </source>
</evidence>
<evidence type="ECO:0000255" key="2"/>
<evidence type="ECO:0000269" key="3">
    <source>
    </source>
</evidence>
<evidence type="ECO:0000269" key="4">
    <source>
    </source>
</evidence>
<evidence type="ECO:0000303" key="5">
    <source>
    </source>
</evidence>
<evidence type="ECO:0000303" key="6">
    <source>
    </source>
</evidence>
<evidence type="ECO:0000303" key="7">
    <source>
    </source>
</evidence>
<evidence type="ECO:0000305" key="8"/>
<evidence type="ECO:0000312" key="9">
    <source>
        <dbReference type="HGNC" id="HGNC:20115"/>
    </source>
</evidence>
<reference key="1">
    <citation type="journal article" date="2004" name="J. Biol. Chem.">
        <title>Cloning and identification of hepatocellular carcinoma down-regulated mitochondrial carrier protein, a novel liver-specific uncoupling protein.</title>
        <authorList>
            <person name="Tan M.G.K."/>
            <person name="Ooi L.L.P.J."/>
            <person name="Aw S.E."/>
            <person name="Hui K.M."/>
        </authorList>
    </citation>
    <scope>NUCLEOTIDE SEQUENCE [MRNA] (ISOFORMS 1 AND 2)</scope>
    <scope>SUBCELLULAR LOCATION</scope>
    <scope>TISSUE SPECIFICITY</scope>
    <scope>INDUCTION</scope>
</reference>
<reference key="2">
    <citation type="journal article" date="2004" name="Oncogene">
        <title>Expression profiling and differential screening between hepatoblastomas and the corresponding normal livers: identification of high expression of the PLK1 oncogene as a poor-prognostic indicator of hepatoblastomas.</title>
        <authorList>
            <person name="Yamada S."/>
            <person name="Ohira M."/>
            <person name="Horie H."/>
            <person name="Ando K."/>
            <person name="Takayasu H."/>
            <person name="Suzuki Y."/>
            <person name="Sugano S."/>
            <person name="Hirata T."/>
            <person name="Goto T."/>
            <person name="Matsunaga T."/>
            <person name="Hiyama E."/>
            <person name="Hayashi Y."/>
            <person name="Ando H."/>
            <person name="Suita S."/>
            <person name="Kaneko M."/>
            <person name="Sasaki F."/>
            <person name="Hashizume K."/>
            <person name="Ohnuma N."/>
            <person name="Nakagawara A."/>
        </authorList>
    </citation>
    <scope>NUCLEOTIDE SEQUENCE [LARGE SCALE MRNA] (ISOFORM 2)</scope>
</reference>
<reference key="3">
    <citation type="journal article" date="2004" name="Nat. Genet.">
        <title>Complete sequencing and characterization of 21,243 full-length human cDNAs.</title>
        <authorList>
            <person name="Ota T."/>
            <person name="Suzuki Y."/>
            <person name="Nishikawa T."/>
            <person name="Otsuki T."/>
            <person name="Sugiyama T."/>
            <person name="Irie R."/>
            <person name="Wakamatsu A."/>
            <person name="Hayashi K."/>
            <person name="Sato H."/>
            <person name="Nagai K."/>
            <person name="Kimura K."/>
            <person name="Makita H."/>
            <person name="Sekine M."/>
            <person name="Obayashi M."/>
            <person name="Nishi T."/>
            <person name="Shibahara T."/>
            <person name="Tanaka T."/>
            <person name="Ishii S."/>
            <person name="Yamamoto J."/>
            <person name="Saito K."/>
            <person name="Kawai Y."/>
            <person name="Isono Y."/>
            <person name="Nakamura Y."/>
            <person name="Nagahari K."/>
            <person name="Murakami K."/>
            <person name="Yasuda T."/>
            <person name="Iwayanagi T."/>
            <person name="Wagatsuma M."/>
            <person name="Shiratori A."/>
            <person name="Sudo H."/>
            <person name="Hosoiri T."/>
            <person name="Kaku Y."/>
            <person name="Kodaira H."/>
            <person name="Kondo H."/>
            <person name="Sugawara M."/>
            <person name="Takahashi M."/>
            <person name="Kanda K."/>
            <person name="Yokoi T."/>
            <person name="Furuya T."/>
            <person name="Kikkawa E."/>
            <person name="Omura Y."/>
            <person name="Abe K."/>
            <person name="Kamihara K."/>
            <person name="Katsuta N."/>
            <person name="Sato K."/>
            <person name="Tanikawa M."/>
            <person name="Yamazaki M."/>
            <person name="Ninomiya K."/>
            <person name="Ishibashi T."/>
            <person name="Yamashita H."/>
            <person name="Murakawa K."/>
            <person name="Fujimori K."/>
            <person name="Tanai H."/>
            <person name="Kimata M."/>
            <person name="Watanabe M."/>
            <person name="Hiraoka S."/>
            <person name="Chiba Y."/>
            <person name="Ishida S."/>
            <person name="Ono Y."/>
            <person name="Takiguchi S."/>
            <person name="Watanabe S."/>
            <person name="Yosida M."/>
            <person name="Hotuta T."/>
            <person name="Kusano J."/>
            <person name="Kanehori K."/>
            <person name="Takahashi-Fujii A."/>
            <person name="Hara H."/>
            <person name="Tanase T.-O."/>
            <person name="Nomura Y."/>
            <person name="Togiya S."/>
            <person name="Komai F."/>
            <person name="Hara R."/>
            <person name="Takeuchi K."/>
            <person name="Arita M."/>
            <person name="Imose N."/>
            <person name="Musashino K."/>
            <person name="Yuuki H."/>
            <person name="Oshima A."/>
            <person name="Sasaki N."/>
            <person name="Aotsuka S."/>
            <person name="Yoshikawa Y."/>
            <person name="Matsunawa H."/>
            <person name="Ichihara T."/>
            <person name="Shiohata N."/>
            <person name="Sano S."/>
            <person name="Moriya S."/>
            <person name="Momiyama H."/>
            <person name="Satoh N."/>
            <person name="Takami S."/>
            <person name="Terashima Y."/>
            <person name="Suzuki O."/>
            <person name="Nakagawa S."/>
            <person name="Senoh A."/>
            <person name="Mizoguchi H."/>
            <person name="Goto Y."/>
            <person name="Shimizu F."/>
            <person name="Wakebe H."/>
            <person name="Hishigaki H."/>
            <person name="Watanabe T."/>
            <person name="Sugiyama A."/>
            <person name="Takemoto M."/>
            <person name="Kawakami B."/>
            <person name="Yamazaki M."/>
            <person name="Watanabe K."/>
            <person name="Kumagai A."/>
            <person name="Itakura S."/>
            <person name="Fukuzumi Y."/>
            <person name="Fujimori Y."/>
            <person name="Komiyama M."/>
            <person name="Tashiro H."/>
            <person name="Tanigami A."/>
            <person name="Fujiwara T."/>
            <person name="Ono T."/>
            <person name="Yamada K."/>
            <person name="Fujii Y."/>
            <person name="Ozaki K."/>
            <person name="Hirao M."/>
            <person name="Ohmori Y."/>
            <person name="Kawabata A."/>
            <person name="Hikiji T."/>
            <person name="Kobatake N."/>
            <person name="Inagaki H."/>
            <person name="Ikema Y."/>
            <person name="Okamoto S."/>
            <person name="Okitani R."/>
            <person name="Kawakami T."/>
            <person name="Noguchi S."/>
            <person name="Itoh T."/>
            <person name="Shigeta K."/>
            <person name="Senba T."/>
            <person name="Matsumura K."/>
            <person name="Nakajima Y."/>
            <person name="Mizuno T."/>
            <person name="Morinaga M."/>
            <person name="Sasaki M."/>
            <person name="Togashi T."/>
            <person name="Oyama M."/>
            <person name="Hata H."/>
            <person name="Watanabe M."/>
            <person name="Komatsu T."/>
            <person name="Mizushima-Sugano J."/>
            <person name="Satoh T."/>
            <person name="Shirai Y."/>
            <person name="Takahashi Y."/>
            <person name="Nakagawa K."/>
            <person name="Okumura K."/>
            <person name="Nagase T."/>
            <person name="Nomura N."/>
            <person name="Kikuchi H."/>
            <person name="Masuho Y."/>
            <person name="Yamashita R."/>
            <person name="Nakai K."/>
            <person name="Yada T."/>
            <person name="Nakamura Y."/>
            <person name="Ohara O."/>
            <person name="Isogai T."/>
            <person name="Sugano S."/>
        </authorList>
    </citation>
    <scope>NUCLEOTIDE SEQUENCE [LARGE SCALE MRNA] (ISOFORM 1)</scope>
    <source>
        <tissue>Liver</tissue>
    </source>
</reference>
<reference key="4">
    <citation type="submission" date="2003-02" db="EMBL/GenBank/DDBJ databases">
        <title>Full-length cDNA libraries and normalization.</title>
        <authorList>
            <person name="Li W.B."/>
            <person name="Gruber C."/>
            <person name="Jessee J."/>
            <person name="Polayes D."/>
        </authorList>
    </citation>
    <scope>NUCLEOTIDE SEQUENCE [LARGE SCALE MRNA] (ISOFORM 1)</scope>
    <source>
        <tissue>Fetal liver</tissue>
    </source>
</reference>
<reference key="5">
    <citation type="submission" date="2005-07" db="EMBL/GenBank/DDBJ databases">
        <authorList>
            <person name="Mural R.J."/>
            <person name="Istrail S."/>
            <person name="Sutton G.G."/>
            <person name="Florea L."/>
            <person name="Halpern A.L."/>
            <person name="Mobarry C.M."/>
            <person name="Lippert R."/>
            <person name="Walenz B."/>
            <person name="Shatkay H."/>
            <person name="Dew I."/>
            <person name="Miller J.R."/>
            <person name="Flanigan M.J."/>
            <person name="Edwards N.J."/>
            <person name="Bolanos R."/>
            <person name="Fasulo D."/>
            <person name="Halldorsson B.V."/>
            <person name="Hannenhalli S."/>
            <person name="Turner R."/>
            <person name="Yooseph S."/>
            <person name="Lu F."/>
            <person name="Nusskern D.R."/>
            <person name="Shue B.C."/>
            <person name="Zheng X.H."/>
            <person name="Zhong F."/>
            <person name="Delcher A.L."/>
            <person name="Huson D.H."/>
            <person name="Kravitz S.A."/>
            <person name="Mouchard L."/>
            <person name="Reinert K."/>
            <person name="Remington K.A."/>
            <person name="Clark A.G."/>
            <person name="Waterman M.S."/>
            <person name="Eichler E.E."/>
            <person name="Adams M.D."/>
            <person name="Hunkapiller M.W."/>
            <person name="Myers E.W."/>
            <person name="Venter J.C."/>
        </authorList>
    </citation>
    <scope>NUCLEOTIDE SEQUENCE [LARGE SCALE GENOMIC DNA]</scope>
</reference>
<reference key="6">
    <citation type="journal article" date="2004" name="Genome Res.">
        <title>The status, quality, and expansion of the NIH full-length cDNA project: the Mammalian Gene Collection (MGC).</title>
        <authorList>
            <consortium name="The MGC Project Team"/>
        </authorList>
    </citation>
    <scope>NUCLEOTIDE SEQUENCE [LARGE SCALE MRNA] (ISOFORM 1)</scope>
</reference>
<reference key="7">
    <citation type="journal article" date="2023" name="Hepatology">
        <title>Hepatic mitochondrial NAD + transporter SLC25A47 activates AMPKalpha mediating lipid metabolism and tumorigenesis.</title>
        <authorList>
            <person name="Cheng L."/>
            <person name="Deepak R.N.V.K."/>
            <person name="Wang G."/>
            <person name="Meng Z."/>
            <person name="Tao L."/>
            <person name="Xie M."/>
            <person name="Chi W."/>
            <person name="Zhang Y."/>
            <person name="Yang M."/>
            <person name="Liao Y."/>
            <person name="Chen R."/>
            <person name="Liang Y."/>
            <person name="Zhang J."/>
            <person name="Huang Y."/>
            <person name="Wang W."/>
            <person name="Guo Z."/>
            <person name="Wang Y."/>
            <person name="Lin J.D."/>
            <person name="Fan H."/>
            <person name="Chen L."/>
        </authorList>
    </citation>
    <scope>FUNCTION</scope>
    <scope>TRANSPORTER ACTIVITY</scope>
    <scope>TISSUE SPECIFICITY</scope>
    <scope>MUTAGENESIS OF LYS-24; ARG-188 AND ARG-284</scope>
</reference>
<protein>
    <recommendedName>
        <fullName>Solute carrier family 25 member 47</fullName>
    </recommendedName>
    <alternativeName>
        <fullName>Hepatocellular carcinoma down-regulated mitochondrial carrier protein</fullName>
    </alternativeName>
    <alternativeName>
        <fullName evidence="7">Mitochondrial NAD(+) transporter SLC25A47</fullName>
    </alternativeName>
</protein>
<keyword id="KW-0025">Alternative splicing</keyword>
<keyword id="KW-0472">Membrane</keyword>
<keyword id="KW-0496">Mitochondrion</keyword>
<keyword id="KW-0999">Mitochondrion inner membrane</keyword>
<keyword id="KW-1000">Mitochondrion outer membrane</keyword>
<keyword id="KW-1267">Proteomics identification</keyword>
<keyword id="KW-1185">Reference proteome</keyword>
<keyword id="KW-0677">Repeat</keyword>
<keyword id="KW-0812">Transmembrane</keyword>
<keyword id="KW-1133">Transmembrane helix</keyword>
<keyword id="KW-0813">Transport</keyword>
<sequence>MDFVAGAIGGVCGVAVGYPLDTVKVRIQTEPKYTGIWHCVRDTYHRERVWGFYRGLSLPVCTVSLVSSVSFGTYRHCLAHICRLRYGNPDAKPTKADITLSGCASGLVRVFLTSPTEVAKVRLQTQTQAQKQQRRLSASGPLAVPPMCPVPPACPEPKYRGPLHCLATVAREEGLCGLYKGSSALVLRDGHSFATYFLSYAVLCEWLSPAGHSRPDVPGVLVAGGCAGVLAWAVATPMDVIKSRLQADGQGQRRYRGLLHCMVTSVREEGPRVLFKGLVLNCCRAFPVNMVVFVAYEAVLRLARGLLT</sequence>
<organism>
    <name type="scientific">Homo sapiens</name>
    <name type="common">Human</name>
    <dbReference type="NCBI Taxonomy" id="9606"/>
    <lineage>
        <taxon>Eukaryota</taxon>
        <taxon>Metazoa</taxon>
        <taxon>Chordata</taxon>
        <taxon>Craniata</taxon>
        <taxon>Vertebrata</taxon>
        <taxon>Euteleostomi</taxon>
        <taxon>Mammalia</taxon>
        <taxon>Eutheria</taxon>
        <taxon>Euarchontoglires</taxon>
        <taxon>Primates</taxon>
        <taxon>Haplorrhini</taxon>
        <taxon>Catarrhini</taxon>
        <taxon>Hominidae</taxon>
        <taxon>Homo</taxon>
    </lineage>
</organism>
<proteinExistence type="evidence at protein level"/>
<feature type="chain" id="PRO_0000291779" description="Solute carrier family 25 member 47">
    <location>
        <begin position="1"/>
        <end position="308"/>
    </location>
</feature>
<feature type="transmembrane region" description="Helical; Name=1" evidence="2">
    <location>
        <begin position="3"/>
        <end position="23"/>
    </location>
</feature>
<feature type="transmembrane region" description="Helical; Name=2" evidence="2">
    <location>
        <begin position="49"/>
        <end position="69"/>
    </location>
</feature>
<feature type="transmembrane region" description="Helical; Name=3" evidence="2">
    <location>
        <begin position="98"/>
        <end position="116"/>
    </location>
</feature>
<feature type="transmembrane region" description="Helical; Name=4" evidence="2">
    <location>
        <begin position="190"/>
        <end position="210"/>
    </location>
</feature>
<feature type="transmembrane region" description="Helical; Name=5" evidence="2">
    <location>
        <begin position="217"/>
        <end position="237"/>
    </location>
</feature>
<feature type="transmembrane region" description="Helical; Name=6" evidence="2">
    <location>
        <begin position="273"/>
        <end position="293"/>
    </location>
</feature>
<feature type="repeat" description="Solcar 1">
    <location>
        <begin position="1"/>
        <end position="80"/>
    </location>
</feature>
<feature type="repeat" description="Solcar 2">
    <location>
        <begin position="93"/>
        <end position="206"/>
    </location>
</feature>
<feature type="repeat" description="Solcar 3">
    <location>
        <begin position="215"/>
        <end position="302"/>
    </location>
</feature>
<feature type="splice variant" id="VSP_026233" description="In isoform 2." evidence="5 6">
    <original>VRIQTE</original>
    <variation>GLLALP</variation>
    <location>
        <begin position="25"/>
        <end position="30"/>
    </location>
</feature>
<feature type="splice variant" id="VSP_026234" description="In isoform 2." evidence="5 6">
    <location>
        <begin position="31"/>
        <end position="308"/>
    </location>
</feature>
<feature type="mutagenesis site" description="Impaired NAD(+) uptake." evidence="4">
    <original>K</original>
    <variation>A</variation>
    <location>
        <position position="24"/>
    </location>
</feature>
<feature type="mutagenesis site" description="Impaired NAD(+) uptake." evidence="4">
    <original>R</original>
    <variation>A</variation>
    <location>
        <position position="188"/>
    </location>
</feature>
<feature type="mutagenesis site" description="Impaired NAD(+) uptake." evidence="4">
    <original>R</original>
    <variation>A</variation>
    <location>
        <position position="284"/>
    </location>
</feature>